<organism>
    <name type="scientific">Leptospira borgpetersenii serovar Hardjo-bovis (strain L550)</name>
    <dbReference type="NCBI Taxonomy" id="355276"/>
    <lineage>
        <taxon>Bacteria</taxon>
        <taxon>Pseudomonadati</taxon>
        <taxon>Spirochaetota</taxon>
        <taxon>Spirochaetia</taxon>
        <taxon>Leptospirales</taxon>
        <taxon>Leptospiraceae</taxon>
        <taxon>Leptospira</taxon>
    </lineage>
</organism>
<dbReference type="EMBL" id="CP000348">
    <property type="protein sequence ID" value="ABJ78306.1"/>
    <property type="molecule type" value="Genomic_DNA"/>
</dbReference>
<dbReference type="RefSeq" id="WP_002753723.1">
    <property type="nucleotide sequence ID" value="NC_008508.1"/>
</dbReference>
<dbReference type="SMR" id="Q054D9"/>
<dbReference type="KEGG" id="lbl:LBL_0746"/>
<dbReference type="HOGENOM" id="CLU_072226_1_1_12"/>
<dbReference type="GO" id="GO:0015935">
    <property type="term" value="C:small ribosomal subunit"/>
    <property type="evidence" value="ECO:0007669"/>
    <property type="project" value="InterPro"/>
</dbReference>
<dbReference type="GO" id="GO:0019843">
    <property type="term" value="F:rRNA binding"/>
    <property type="evidence" value="ECO:0007669"/>
    <property type="project" value="UniProtKB-UniRule"/>
</dbReference>
<dbReference type="GO" id="GO:0003735">
    <property type="term" value="F:structural constituent of ribosome"/>
    <property type="evidence" value="ECO:0007669"/>
    <property type="project" value="InterPro"/>
</dbReference>
<dbReference type="GO" id="GO:0000049">
    <property type="term" value="F:tRNA binding"/>
    <property type="evidence" value="ECO:0007669"/>
    <property type="project" value="UniProtKB-UniRule"/>
</dbReference>
<dbReference type="GO" id="GO:0006412">
    <property type="term" value="P:translation"/>
    <property type="evidence" value="ECO:0007669"/>
    <property type="project" value="UniProtKB-UniRule"/>
</dbReference>
<dbReference type="CDD" id="cd14869">
    <property type="entry name" value="uS7_Bacteria"/>
    <property type="match status" value="1"/>
</dbReference>
<dbReference type="FunFam" id="1.10.455.10:FF:000001">
    <property type="entry name" value="30S ribosomal protein S7"/>
    <property type="match status" value="1"/>
</dbReference>
<dbReference type="Gene3D" id="1.10.455.10">
    <property type="entry name" value="Ribosomal protein S7 domain"/>
    <property type="match status" value="1"/>
</dbReference>
<dbReference type="HAMAP" id="MF_00480_B">
    <property type="entry name" value="Ribosomal_uS7_B"/>
    <property type="match status" value="1"/>
</dbReference>
<dbReference type="InterPro" id="IPR000235">
    <property type="entry name" value="Ribosomal_uS7"/>
</dbReference>
<dbReference type="InterPro" id="IPR005717">
    <property type="entry name" value="Ribosomal_uS7_bac/org-type"/>
</dbReference>
<dbReference type="InterPro" id="IPR023798">
    <property type="entry name" value="Ribosomal_uS7_dom"/>
</dbReference>
<dbReference type="InterPro" id="IPR036823">
    <property type="entry name" value="Ribosomal_uS7_dom_sf"/>
</dbReference>
<dbReference type="NCBIfam" id="TIGR01029">
    <property type="entry name" value="rpsG_bact"/>
    <property type="match status" value="1"/>
</dbReference>
<dbReference type="PANTHER" id="PTHR11205">
    <property type="entry name" value="RIBOSOMAL PROTEIN S7"/>
    <property type="match status" value="1"/>
</dbReference>
<dbReference type="Pfam" id="PF00177">
    <property type="entry name" value="Ribosomal_S7"/>
    <property type="match status" value="1"/>
</dbReference>
<dbReference type="PIRSF" id="PIRSF002122">
    <property type="entry name" value="RPS7p_RPS7a_RPS5e_RPS7o"/>
    <property type="match status" value="1"/>
</dbReference>
<dbReference type="SUPFAM" id="SSF47973">
    <property type="entry name" value="Ribosomal protein S7"/>
    <property type="match status" value="1"/>
</dbReference>
<protein>
    <recommendedName>
        <fullName evidence="1">Small ribosomal subunit protein uS7</fullName>
    </recommendedName>
    <alternativeName>
        <fullName evidence="2">30S ribosomal protein S7</fullName>
    </alternativeName>
</protein>
<comment type="function">
    <text evidence="1">One of the primary rRNA binding proteins, it binds directly to 16S rRNA where it nucleates assembly of the head domain of the 30S subunit. Is located at the subunit interface close to the decoding center, probably blocks exit of the E-site tRNA.</text>
</comment>
<comment type="subunit">
    <text evidence="1">Part of the 30S ribosomal subunit. Contacts proteins S9 and S11.</text>
</comment>
<comment type="similarity">
    <text evidence="1">Belongs to the universal ribosomal protein uS7 family.</text>
</comment>
<keyword id="KW-0687">Ribonucleoprotein</keyword>
<keyword id="KW-0689">Ribosomal protein</keyword>
<keyword id="KW-0694">RNA-binding</keyword>
<keyword id="KW-0699">rRNA-binding</keyword>
<keyword id="KW-0820">tRNA-binding</keyword>
<reference key="1">
    <citation type="journal article" date="2006" name="Proc. Natl. Acad. Sci. U.S.A.">
        <title>Genome reduction in Leptospira borgpetersenii reflects limited transmission potential.</title>
        <authorList>
            <person name="Bulach D.M."/>
            <person name="Zuerner R.L."/>
            <person name="Wilson P."/>
            <person name="Seemann T."/>
            <person name="McGrath A."/>
            <person name="Cullen P.A."/>
            <person name="Davis J."/>
            <person name="Johnson M."/>
            <person name="Kuczek E."/>
            <person name="Alt D.P."/>
            <person name="Peterson-Burch B."/>
            <person name="Coppel R.L."/>
            <person name="Rood J.I."/>
            <person name="Davies J.K."/>
            <person name="Adler B."/>
        </authorList>
    </citation>
    <scope>NUCLEOTIDE SEQUENCE [LARGE SCALE GENOMIC DNA]</scope>
    <source>
        <strain>L550</strain>
    </source>
</reference>
<gene>
    <name evidence="1" type="primary">rpsG</name>
    <name type="ordered locus">LBL_0746</name>
</gene>
<sequence>MSRRRGKVEPRKITPDPVYNDVQVAKFINCLMLSGEKSVAERLFYDALEIIQKKTGNDPYTTFREALENAKPQVEVKSRRVGGVTYQVPIEVRPERRLALGIRWLIRYSRDRNEKGMASKLAAEFIEAQKGTGSAIKKKEDIRKMAEANKAFSHYRW</sequence>
<accession>Q054D9</accession>
<name>RS7_LEPBL</name>
<proteinExistence type="inferred from homology"/>
<feature type="chain" id="PRO_1000014219" description="Small ribosomal subunit protein uS7">
    <location>
        <begin position="1"/>
        <end position="157"/>
    </location>
</feature>
<evidence type="ECO:0000255" key="1">
    <source>
        <dbReference type="HAMAP-Rule" id="MF_00480"/>
    </source>
</evidence>
<evidence type="ECO:0000305" key="2"/>